<accession>Q5ADT9</accession>
<accession>A0A1D8PKR6</accession>
<proteinExistence type="inferred from homology"/>
<organism>
    <name type="scientific">Candida albicans (strain SC5314 / ATCC MYA-2876)</name>
    <name type="common">Yeast</name>
    <dbReference type="NCBI Taxonomy" id="237561"/>
    <lineage>
        <taxon>Eukaryota</taxon>
        <taxon>Fungi</taxon>
        <taxon>Dikarya</taxon>
        <taxon>Ascomycota</taxon>
        <taxon>Saccharomycotina</taxon>
        <taxon>Pichiomycetes</taxon>
        <taxon>Debaryomycetaceae</taxon>
        <taxon>Candida/Lodderomyces clade</taxon>
        <taxon>Candida</taxon>
    </lineage>
</organism>
<gene>
    <name type="primary">RSM10</name>
    <name type="ordered locus">CAALFM_C307390CA</name>
    <name type="ORF">CaO19.14044</name>
    <name type="ORF">CaO19.6752</name>
</gene>
<feature type="transit peptide" description="Mitochondrion" evidence="2">
    <location>
        <begin position="1"/>
        <end position="23"/>
    </location>
</feature>
<feature type="chain" id="PRO_0000043258" description="Small ribosomal subunit protein uS10m">
    <location>
        <begin position="24"/>
        <end position="234"/>
    </location>
</feature>
<sequence>MLRIGYRGFSTRSRVFKLSPQEYVNQVQQEKIENEQFKQALSQDQLEYNPKILSSHKLTKNRPIPINVELLKYKPLRLPKTHGDEVATLTIRGYDEDNLIRVGEFALRTAYYMGIPMSPLMALKTEKRLYTVIKSPFAQAKTKQNFHRVTYKKKLVAYDANPEIIDLWLSYINKNKFTDVEYKATVSSYESLNYHEELKSLKEFNLPDAYEGIEDPVAKKVQELLKSKSFKKHL</sequence>
<protein>
    <recommendedName>
        <fullName evidence="1">Small ribosomal subunit protein uS10m</fullName>
    </recommendedName>
    <alternativeName>
        <fullName>37S ribosomal protein S10, mitochondrial</fullName>
    </alternativeName>
    <alternativeName>
        <fullName>Mitochondrial ribosomal small subunit protein 10</fullName>
    </alternativeName>
</protein>
<keyword id="KW-0496">Mitochondrion</keyword>
<keyword id="KW-1185">Reference proteome</keyword>
<keyword id="KW-0687">Ribonucleoprotein</keyword>
<keyword id="KW-0689">Ribosomal protein</keyword>
<keyword id="KW-0809">Transit peptide</keyword>
<comment type="function">
    <text evidence="1">Component of the mitochondrial ribosome (mitoribosome), a dedicated translation machinery responsible for the synthesis of mitochondrial genome-encoded proteins, including at least some of the essential transmembrane subunits of the mitochondrial respiratory chain. The mitoribosomes are attached to the mitochondrial inner membrane and translation products are cotranslationally integrated into the membrane.</text>
</comment>
<comment type="subunit">
    <text evidence="1">Component of the mitochondrial small ribosomal subunit (mt-SSU).</text>
</comment>
<comment type="subcellular location">
    <subcellularLocation>
        <location evidence="1">Mitochondrion</location>
    </subcellularLocation>
</comment>
<comment type="similarity">
    <text evidence="3">Belongs to the universal ribosomal protein uS10 family.</text>
</comment>
<name>RT10_CANAL</name>
<evidence type="ECO:0000250" key="1">
    <source>
        <dbReference type="UniProtKB" id="Q03201"/>
    </source>
</evidence>
<evidence type="ECO:0000255" key="2"/>
<evidence type="ECO:0000305" key="3"/>
<dbReference type="EMBL" id="CP017625">
    <property type="protein sequence ID" value="AOW28741.1"/>
    <property type="molecule type" value="Genomic_DNA"/>
</dbReference>
<dbReference type="RefSeq" id="XP_719849.1">
    <property type="nucleotide sequence ID" value="XM_714756.1"/>
</dbReference>
<dbReference type="SMR" id="Q5ADT9"/>
<dbReference type="FunCoup" id="Q5ADT9">
    <property type="interactions" value="289"/>
</dbReference>
<dbReference type="STRING" id="237561.Q5ADT9"/>
<dbReference type="EnsemblFungi" id="C3_07390C_A-T">
    <property type="protein sequence ID" value="C3_07390C_A-T-p1"/>
    <property type="gene ID" value="C3_07390C_A"/>
</dbReference>
<dbReference type="GeneID" id="3638472"/>
<dbReference type="KEGG" id="cal:CAALFM_C307390CA"/>
<dbReference type="CGD" id="CAL0000175471">
    <property type="gene designation" value="orf19.14044"/>
</dbReference>
<dbReference type="VEuPathDB" id="FungiDB:C3_07390C_A"/>
<dbReference type="eggNOG" id="KOG3321">
    <property type="taxonomic scope" value="Eukaryota"/>
</dbReference>
<dbReference type="HOGENOM" id="CLU_051208_4_0_1"/>
<dbReference type="InParanoid" id="Q5ADT9"/>
<dbReference type="OMA" id="LRKHQFY"/>
<dbReference type="OrthoDB" id="366214at2759"/>
<dbReference type="PRO" id="PR:Q5ADT9"/>
<dbReference type="Proteomes" id="UP000000559">
    <property type="component" value="Chromosome 3"/>
</dbReference>
<dbReference type="GO" id="GO:0005763">
    <property type="term" value="C:mitochondrial small ribosomal subunit"/>
    <property type="evidence" value="ECO:0007669"/>
    <property type="project" value="EnsemblFungi"/>
</dbReference>
<dbReference type="GO" id="GO:0005739">
    <property type="term" value="C:mitochondrion"/>
    <property type="evidence" value="ECO:0000318"/>
    <property type="project" value="GO_Central"/>
</dbReference>
<dbReference type="GO" id="GO:0015935">
    <property type="term" value="C:small ribosomal subunit"/>
    <property type="evidence" value="ECO:0000318"/>
    <property type="project" value="GO_Central"/>
</dbReference>
<dbReference type="GO" id="GO:0003735">
    <property type="term" value="F:structural constituent of ribosome"/>
    <property type="evidence" value="ECO:0000318"/>
    <property type="project" value="GO_Central"/>
</dbReference>
<dbReference type="GO" id="GO:0006412">
    <property type="term" value="P:translation"/>
    <property type="evidence" value="ECO:0007669"/>
    <property type="project" value="InterPro"/>
</dbReference>
<dbReference type="Gene3D" id="3.30.70.600">
    <property type="entry name" value="Ribosomal protein S10 domain"/>
    <property type="match status" value="1"/>
</dbReference>
<dbReference type="InterPro" id="IPR001848">
    <property type="entry name" value="Ribosomal_uS10"/>
</dbReference>
<dbReference type="InterPro" id="IPR027486">
    <property type="entry name" value="Ribosomal_uS10_dom"/>
</dbReference>
<dbReference type="InterPro" id="IPR036838">
    <property type="entry name" value="Ribosomal_uS10_dom_sf"/>
</dbReference>
<dbReference type="PANTHER" id="PTHR11700">
    <property type="entry name" value="30S RIBOSOMAL PROTEIN S10 FAMILY MEMBER"/>
    <property type="match status" value="1"/>
</dbReference>
<dbReference type="Pfam" id="PF00338">
    <property type="entry name" value="Ribosomal_S10"/>
    <property type="match status" value="1"/>
</dbReference>
<dbReference type="SMART" id="SM01403">
    <property type="entry name" value="Ribosomal_S10"/>
    <property type="match status" value="1"/>
</dbReference>
<dbReference type="SUPFAM" id="SSF54999">
    <property type="entry name" value="Ribosomal protein S10"/>
    <property type="match status" value="1"/>
</dbReference>
<reference key="1">
    <citation type="journal article" date="2004" name="Proc. Natl. Acad. Sci. U.S.A.">
        <title>The diploid genome sequence of Candida albicans.</title>
        <authorList>
            <person name="Jones T."/>
            <person name="Federspiel N.A."/>
            <person name="Chibana H."/>
            <person name="Dungan J."/>
            <person name="Kalman S."/>
            <person name="Magee B.B."/>
            <person name="Newport G."/>
            <person name="Thorstenson Y.R."/>
            <person name="Agabian N."/>
            <person name="Magee P.T."/>
            <person name="Davis R.W."/>
            <person name="Scherer S."/>
        </authorList>
    </citation>
    <scope>NUCLEOTIDE SEQUENCE [LARGE SCALE GENOMIC DNA]</scope>
    <source>
        <strain>SC5314 / ATCC MYA-2876</strain>
    </source>
</reference>
<reference key="2">
    <citation type="journal article" date="2007" name="Genome Biol.">
        <title>Assembly of the Candida albicans genome into sixteen supercontigs aligned on the eight chromosomes.</title>
        <authorList>
            <person name="van het Hoog M."/>
            <person name="Rast T.J."/>
            <person name="Martchenko M."/>
            <person name="Grindle S."/>
            <person name="Dignard D."/>
            <person name="Hogues H."/>
            <person name="Cuomo C."/>
            <person name="Berriman M."/>
            <person name="Scherer S."/>
            <person name="Magee B.B."/>
            <person name="Whiteway M."/>
            <person name="Chibana H."/>
            <person name="Nantel A."/>
            <person name="Magee P.T."/>
        </authorList>
    </citation>
    <scope>GENOME REANNOTATION</scope>
    <source>
        <strain>SC5314 / ATCC MYA-2876</strain>
    </source>
</reference>
<reference key="3">
    <citation type="journal article" date="2013" name="Genome Biol.">
        <title>Assembly of a phased diploid Candida albicans genome facilitates allele-specific measurements and provides a simple model for repeat and indel structure.</title>
        <authorList>
            <person name="Muzzey D."/>
            <person name="Schwartz K."/>
            <person name="Weissman J.S."/>
            <person name="Sherlock G."/>
        </authorList>
    </citation>
    <scope>NUCLEOTIDE SEQUENCE [LARGE SCALE GENOMIC DNA]</scope>
    <scope>GENOME REANNOTATION</scope>
    <source>
        <strain>SC5314 / ATCC MYA-2876</strain>
    </source>
</reference>